<protein>
    <recommendedName>
        <fullName evidence="7">Large ribosomal subunit protein uL29m</fullName>
    </recommendedName>
    <alternativeName>
        <fullName>39S ribosomal protein L47, mitochondrial</fullName>
        <shortName>L47mt</shortName>
        <shortName>MRP-L47</shortName>
    </alternativeName>
    <alternativeName>
        <fullName>Nasopharyngeal carcinoma metastasis-related protein 1</fullName>
    </alternativeName>
</protein>
<gene>
    <name type="primary">MRPL47</name>
    <name type="synonym">NCM1</name>
    <name type="ORF">CGI-204</name>
</gene>
<reference key="1">
    <citation type="journal article" date="2006" name="Nature">
        <title>The DNA sequence, annotation and analysis of human chromosome 3.</title>
        <authorList>
            <person name="Muzny D.M."/>
            <person name="Scherer S.E."/>
            <person name="Kaul R."/>
            <person name="Wang J."/>
            <person name="Yu J."/>
            <person name="Sudbrak R."/>
            <person name="Buhay C.J."/>
            <person name="Chen R."/>
            <person name="Cree A."/>
            <person name="Ding Y."/>
            <person name="Dugan-Rocha S."/>
            <person name="Gill R."/>
            <person name="Gunaratne P."/>
            <person name="Harris R.A."/>
            <person name="Hawes A.C."/>
            <person name="Hernandez J."/>
            <person name="Hodgson A.V."/>
            <person name="Hume J."/>
            <person name="Jackson A."/>
            <person name="Khan Z.M."/>
            <person name="Kovar-Smith C."/>
            <person name="Lewis L.R."/>
            <person name="Lozado R.J."/>
            <person name="Metzker M.L."/>
            <person name="Milosavljevic A."/>
            <person name="Miner G.R."/>
            <person name="Morgan M.B."/>
            <person name="Nazareth L.V."/>
            <person name="Scott G."/>
            <person name="Sodergren E."/>
            <person name="Song X.-Z."/>
            <person name="Steffen D."/>
            <person name="Wei S."/>
            <person name="Wheeler D.A."/>
            <person name="Wright M.W."/>
            <person name="Worley K.C."/>
            <person name="Yuan Y."/>
            <person name="Zhang Z."/>
            <person name="Adams C.Q."/>
            <person name="Ansari-Lari M.A."/>
            <person name="Ayele M."/>
            <person name="Brown M.J."/>
            <person name="Chen G."/>
            <person name="Chen Z."/>
            <person name="Clendenning J."/>
            <person name="Clerc-Blankenburg K.P."/>
            <person name="Chen R."/>
            <person name="Chen Z."/>
            <person name="Davis C."/>
            <person name="Delgado O."/>
            <person name="Dinh H.H."/>
            <person name="Dong W."/>
            <person name="Draper H."/>
            <person name="Ernst S."/>
            <person name="Fu G."/>
            <person name="Gonzalez-Garay M.L."/>
            <person name="Garcia D.K."/>
            <person name="Gillett W."/>
            <person name="Gu J."/>
            <person name="Hao B."/>
            <person name="Haugen E."/>
            <person name="Havlak P."/>
            <person name="He X."/>
            <person name="Hennig S."/>
            <person name="Hu S."/>
            <person name="Huang W."/>
            <person name="Jackson L.R."/>
            <person name="Jacob L.S."/>
            <person name="Kelly S.H."/>
            <person name="Kube M."/>
            <person name="Levy R."/>
            <person name="Li Z."/>
            <person name="Liu B."/>
            <person name="Liu J."/>
            <person name="Liu W."/>
            <person name="Lu J."/>
            <person name="Maheshwari M."/>
            <person name="Nguyen B.-V."/>
            <person name="Okwuonu G.O."/>
            <person name="Palmeiri A."/>
            <person name="Pasternak S."/>
            <person name="Perez L.M."/>
            <person name="Phelps K.A."/>
            <person name="Plopper F.J."/>
            <person name="Qiang B."/>
            <person name="Raymond C."/>
            <person name="Rodriguez R."/>
            <person name="Saenphimmachak C."/>
            <person name="Santibanez J."/>
            <person name="Shen H."/>
            <person name="Shen Y."/>
            <person name="Subramanian S."/>
            <person name="Tabor P.E."/>
            <person name="Verduzco D."/>
            <person name="Waldron L."/>
            <person name="Wang J."/>
            <person name="Wang J."/>
            <person name="Wang Q."/>
            <person name="Williams G.A."/>
            <person name="Wong G.K.-S."/>
            <person name="Yao Z."/>
            <person name="Zhang J."/>
            <person name="Zhang X."/>
            <person name="Zhao G."/>
            <person name="Zhou J."/>
            <person name="Zhou Y."/>
            <person name="Nelson D."/>
            <person name="Lehrach H."/>
            <person name="Reinhardt R."/>
            <person name="Naylor S.L."/>
            <person name="Yang H."/>
            <person name="Olson M."/>
            <person name="Weinstock G."/>
            <person name="Gibbs R.A."/>
        </authorList>
    </citation>
    <scope>NUCLEOTIDE SEQUENCE [LARGE SCALE GENOMIC DNA]</scope>
</reference>
<reference evidence="8 9" key="2">
    <citation type="submission" date="2005-09" db="EMBL/GenBank/DDBJ databases">
        <authorList>
            <person name="Mural R.J."/>
            <person name="Istrail S."/>
            <person name="Sutton G.G."/>
            <person name="Florea L."/>
            <person name="Halpern A.L."/>
            <person name="Mobarry C.M."/>
            <person name="Lippert R."/>
            <person name="Walenz B."/>
            <person name="Shatkay H."/>
            <person name="Dew I."/>
            <person name="Miller J.R."/>
            <person name="Flanigan M.J."/>
            <person name="Edwards N.J."/>
            <person name="Bolanos R."/>
            <person name="Fasulo D."/>
            <person name="Halldorsson B.V."/>
            <person name="Hannenhalli S."/>
            <person name="Turner R."/>
            <person name="Yooseph S."/>
            <person name="Lu F."/>
            <person name="Nusskern D.R."/>
            <person name="Shue B.C."/>
            <person name="Zheng X.H."/>
            <person name="Zhong F."/>
            <person name="Delcher A.L."/>
            <person name="Huson D.H."/>
            <person name="Kravitz S.A."/>
            <person name="Mouchard L."/>
            <person name="Reinert K."/>
            <person name="Remington K.A."/>
            <person name="Clark A.G."/>
            <person name="Waterman M.S."/>
            <person name="Eichler E.E."/>
            <person name="Adams M.D."/>
            <person name="Hunkapiller M.W."/>
            <person name="Myers E.W."/>
            <person name="Venter J.C."/>
        </authorList>
    </citation>
    <scope>NUCLEOTIDE SEQUENCE [LARGE SCALE GENOMIC DNA]</scope>
</reference>
<reference key="3">
    <citation type="journal article" date="2004" name="Genome Res.">
        <title>The status, quality, and expansion of the NIH full-length cDNA project: the Mammalian Gene Collection (MGC).</title>
        <authorList>
            <consortium name="The MGC Project Team"/>
        </authorList>
    </citation>
    <scope>NUCLEOTIDE SEQUENCE [LARGE SCALE MRNA] (ISOFORMS 2 AND 3)</scope>
    <source>
        <tissue>Lymph</tissue>
    </source>
</reference>
<reference evidence="8 9" key="4">
    <citation type="submission" date="2003-01" db="EMBL/GenBank/DDBJ databases">
        <title>Nasopharyngeal carcinoma metastasis-related gene 1.</title>
        <authorList>
            <person name="Zhu L.P."/>
            <person name="Jin Y.L."/>
        </authorList>
    </citation>
    <scope>NUCLEOTIDE SEQUENCE [MRNA] OF 2-250 (ISOFORM 1)</scope>
</reference>
<reference key="5">
    <citation type="journal article" date="2001" name="Biochim. Biophys. Acta">
        <title>Identification of the human crooked neck gene by comparative gene identification.</title>
        <authorList>
            <person name="Lai C.-H."/>
            <person name="Chiu J.-Y."/>
            <person name="Lin W.-C."/>
        </authorList>
    </citation>
    <scope>NUCLEOTIDE SEQUENCE [MRNA] OF 36-250 (ISOFORMS 1/2)</scope>
</reference>
<reference key="6">
    <citation type="journal article" date="2001" name="J. Biol. Chem.">
        <title>The large subunit of the mammalian mitochondrial ribosome. Analysis of the complement of ribosomal proteins present.</title>
        <authorList>
            <person name="Koc E.C."/>
            <person name="Burkhart W."/>
            <person name="Blackburn K."/>
            <person name="Moyer M.B."/>
            <person name="Schlatzer D.M."/>
            <person name="Moseley A."/>
            <person name="Spremulli L.L."/>
        </authorList>
    </citation>
    <scope>IDENTIFICATION</scope>
</reference>
<reference key="7">
    <citation type="journal article" date="2009" name="Science">
        <title>Lysine acetylation targets protein complexes and co-regulates major cellular functions.</title>
        <authorList>
            <person name="Choudhary C."/>
            <person name="Kumar C."/>
            <person name="Gnad F."/>
            <person name="Nielsen M.L."/>
            <person name="Rehman M."/>
            <person name="Walther T.C."/>
            <person name="Olsen J.V."/>
            <person name="Mann M."/>
        </authorList>
    </citation>
    <scope>ACETYLATION [LARGE SCALE ANALYSIS] AT LYS-144</scope>
    <scope>IDENTIFICATION BY MASS SPECTROMETRY [LARGE SCALE ANALYSIS]</scope>
</reference>
<reference key="8">
    <citation type="journal article" date="2011" name="BMC Syst. Biol.">
        <title>Initial characterization of the human central proteome.</title>
        <authorList>
            <person name="Burkard T.R."/>
            <person name="Planyavsky M."/>
            <person name="Kaupe I."/>
            <person name="Breitwieser F.P."/>
            <person name="Buerckstuemmer T."/>
            <person name="Bennett K.L."/>
            <person name="Superti-Furga G."/>
            <person name="Colinge J."/>
        </authorList>
    </citation>
    <scope>IDENTIFICATION BY MASS SPECTROMETRY [LARGE SCALE ANALYSIS]</scope>
</reference>
<reference key="9">
    <citation type="journal article" date="2015" name="Proteomics">
        <title>N-terminome analysis of the human mitochondrial proteome.</title>
        <authorList>
            <person name="Vaca Jacome A.S."/>
            <person name="Rabilloud T."/>
            <person name="Schaeffer-Reiss C."/>
            <person name="Rompais M."/>
            <person name="Ayoub D."/>
            <person name="Lane L."/>
            <person name="Bairoch A."/>
            <person name="Van Dorsselaer A."/>
            <person name="Carapito C."/>
        </authorList>
    </citation>
    <scope>IDENTIFICATION BY MASS SPECTROMETRY [LARGE SCALE ANALYSIS]</scope>
</reference>
<reference evidence="10" key="10">
    <citation type="journal article" date="2014" name="Science">
        <title>Structure of the large ribosomal subunit from human mitochondria.</title>
        <authorList>
            <person name="Brown A."/>
            <person name="Amunts A."/>
            <person name="Bai X.C."/>
            <person name="Sugimoto Y."/>
            <person name="Edwards P.C."/>
            <person name="Murshudov G."/>
            <person name="Scheres S.H."/>
            <person name="Ramakrishnan V."/>
        </authorList>
    </citation>
    <scope>STRUCTURE BY ELECTRON MICROSCOPY (3.40 ANGSTROMS)</scope>
    <scope>SUBCELLULAR LOCATION</scope>
    <scope>SUBUNIT</scope>
</reference>
<reference evidence="11" key="11">
    <citation type="journal article" date="2015" name="Science">
        <title>Ribosome. The structure of the human mitochondrial ribosome.</title>
        <authorList>
            <person name="Amunts A."/>
            <person name="Brown A."/>
            <person name="Toots J."/>
            <person name="Scheres S.H."/>
            <person name="Ramakrishnan V."/>
        </authorList>
    </citation>
    <scope>STRUCTURE BY ELECTRON MICROSCOPY (3.50 ANGSTROMS)</scope>
    <scope>SUBCELLULAR LOCATION</scope>
    <scope>SUBUNIT</scope>
</reference>
<reference evidence="12 13" key="12">
    <citation type="journal article" date="2017" name="Nat. Struct. Mol. Biol.">
        <title>Structures of the human mitochondrial ribosome in native states of assembly.</title>
        <authorList>
            <person name="Brown A."/>
            <person name="Rathore S."/>
            <person name="Kimanius D."/>
            <person name="Aibara S."/>
            <person name="Bai X.C."/>
            <person name="Rorbach J."/>
            <person name="Amunts A."/>
            <person name="Ramakrishnan V."/>
        </authorList>
    </citation>
    <scope>STRUCTURE BY ELECTRON MICROSCOPY (3.03 ANGSTROMS)</scope>
    <scope>SUBCELLULAR LOCATION</scope>
    <scope>SUBUNIT</scope>
</reference>
<reference evidence="14 15" key="13">
    <citation type="journal article" date="2022" name="Nat. Commun.">
        <title>A late-stage assembly checkpoint of the human mitochondrial ribosome large subunit.</title>
        <authorList>
            <person name="Rebelo-Guiomar P."/>
            <person name="Pellegrino S."/>
            <person name="Dent K.C."/>
            <person name="Sas-Chen A."/>
            <person name="Miller-Fleming L."/>
            <person name="Garone C."/>
            <person name="Van Haute L."/>
            <person name="Rogan J.F."/>
            <person name="Dinan A."/>
            <person name="Firth A.E."/>
            <person name="Andrews B."/>
            <person name="Whitworth A.J."/>
            <person name="Schwartz S."/>
            <person name="Warren A.J."/>
            <person name="Minczuk M."/>
        </authorList>
    </citation>
    <scope>STRUCTURE BY ELECTRON MICROSCOPY (2.9 ANGSTROMS) IN COMPLEX WITH MTLSU</scope>
    <scope>SUBUNIT</scope>
</reference>
<dbReference type="EMBL" id="AC090425">
    <property type="status" value="NOT_ANNOTATED_CDS"/>
    <property type="molecule type" value="Genomic_DNA"/>
</dbReference>
<dbReference type="EMBL" id="CH471052">
    <property type="protein sequence ID" value="EAW78395.1"/>
    <property type="molecule type" value="Genomic_DNA"/>
</dbReference>
<dbReference type="EMBL" id="CH471052">
    <property type="protein sequence ID" value="EAW78396.1"/>
    <property type="molecule type" value="Genomic_DNA"/>
</dbReference>
<dbReference type="EMBL" id="BC021575">
    <property type="protein sequence ID" value="AAH21575.1"/>
    <property type="molecule type" value="mRNA"/>
</dbReference>
<dbReference type="EMBL" id="BC032522">
    <property type="protein sequence ID" value="AAH32522.1"/>
    <property type="molecule type" value="mRNA"/>
</dbReference>
<dbReference type="EMBL" id="AY212270">
    <property type="protein sequence ID" value="AAO92749.1"/>
    <property type="status" value="ALT_INIT"/>
    <property type="molecule type" value="mRNA"/>
</dbReference>
<dbReference type="EMBL" id="AF285120">
    <property type="protein sequence ID" value="AAG01157.1"/>
    <property type="status" value="ALT_SEQ"/>
    <property type="molecule type" value="mRNA"/>
</dbReference>
<dbReference type="CCDS" id="CCDS3232.1">
    <molecule id="Q9HD33-1"/>
</dbReference>
<dbReference type="CCDS" id="CCDS3233.1">
    <molecule id="Q9HD33-3"/>
</dbReference>
<dbReference type="RefSeq" id="NP_065142.2">
    <molecule id="Q9HD33-1"/>
    <property type="nucleotide sequence ID" value="NM_020409.2"/>
</dbReference>
<dbReference type="RefSeq" id="NP_817125.1">
    <molecule id="Q9HD33-3"/>
    <property type="nucleotide sequence ID" value="NM_177988.1"/>
</dbReference>
<dbReference type="PDB" id="3J7Y">
    <property type="method" value="EM"/>
    <property type="resolution" value="3.40 A"/>
    <property type="chains" value="Y=1-250"/>
</dbReference>
<dbReference type="PDB" id="3J9M">
    <property type="method" value="EM"/>
    <property type="resolution" value="3.50 A"/>
    <property type="chains" value="Y=1-250"/>
</dbReference>
<dbReference type="PDB" id="5OOL">
    <property type="method" value="EM"/>
    <property type="resolution" value="3.06 A"/>
    <property type="chains" value="Y=1-250"/>
</dbReference>
<dbReference type="PDB" id="5OOM">
    <property type="method" value="EM"/>
    <property type="resolution" value="3.03 A"/>
    <property type="chains" value="Y=1-250"/>
</dbReference>
<dbReference type="PDB" id="6I9R">
    <property type="method" value="EM"/>
    <property type="resolution" value="3.90 A"/>
    <property type="chains" value="Y=1-250"/>
</dbReference>
<dbReference type="PDB" id="6NU2">
    <property type="method" value="EM"/>
    <property type="resolution" value="3.90 A"/>
    <property type="chains" value="Y=63-238"/>
</dbReference>
<dbReference type="PDB" id="6NU3">
    <property type="method" value="EM"/>
    <property type="resolution" value="4.40 A"/>
    <property type="chains" value="Y=1-250"/>
</dbReference>
<dbReference type="PDB" id="6VLZ">
    <property type="method" value="EM"/>
    <property type="resolution" value="2.97 A"/>
    <property type="chains" value="Y=1-250"/>
</dbReference>
<dbReference type="PDB" id="6VMI">
    <property type="method" value="EM"/>
    <property type="resolution" value="2.96 A"/>
    <property type="chains" value="Y=1-250"/>
</dbReference>
<dbReference type="PDB" id="6ZM5">
    <property type="method" value="EM"/>
    <property type="resolution" value="2.89 A"/>
    <property type="chains" value="Y=1-250"/>
</dbReference>
<dbReference type="PDB" id="6ZM6">
    <property type="method" value="EM"/>
    <property type="resolution" value="2.59 A"/>
    <property type="chains" value="Y=1-250"/>
</dbReference>
<dbReference type="PDB" id="6ZS9">
    <property type="method" value="EM"/>
    <property type="resolution" value="4.00 A"/>
    <property type="chains" value="XY=1-250"/>
</dbReference>
<dbReference type="PDB" id="6ZSA">
    <property type="method" value="EM"/>
    <property type="resolution" value="4.00 A"/>
    <property type="chains" value="XY=1-250"/>
</dbReference>
<dbReference type="PDB" id="6ZSB">
    <property type="method" value="EM"/>
    <property type="resolution" value="4.50 A"/>
    <property type="chains" value="XY=1-250"/>
</dbReference>
<dbReference type="PDB" id="6ZSC">
    <property type="method" value="EM"/>
    <property type="resolution" value="3.50 A"/>
    <property type="chains" value="XY=1-250"/>
</dbReference>
<dbReference type="PDB" id="6ZSD">
    <property type="method" value="EM"/>
    <property type="resolution" value="3.70 A"/>
    <property type="chains" value="XY=1-250"/>
</dbReference>
<dbReference type="PDB" id="6ZSE">
    <property type="method" value="EM"/>
    <property type="resolution" value="5.00 A"/>
    <property type="chains" value="XY=1-250"/>
</dbReference>
<dbReference type="PDB" id="6ZSG">
    <property type="method" value="EM"/>
    <property type="resolution" value="4.00 A"/>
    <property type="chains" value="XY=1-250"/>
</dbReference>
<dbReference type="PDB" id="7A5F">
    <property type="method" value="EM"/>
    <property type="resolution" value="4.40 A"/>
    <property type="chains" value="Y3=1-250"/>
</dbReference>
<dbReference type="PDB" id="7A5G">
    <property type="method" value="EM"/>
    <property type="resolution" value="4.33 A"/>
    <property type="chains" value="Y3=1-250"/>
</dbReference>
<dbReference type="PDB" id="7A5H">
    <property type="method" value="EM"/>
    <property type="resolution" value="3.30 A"/>
    <property type="chains" value="Y=1-250"/>
</dbReference>
<dbReference type="PDB" id="7A5I">
    <property type="method" value="EM"/>
    <property type="resolution" value="3.70 A"/>
    <property type="chains" value="Y3=1-250"/>
</dbReference>
<dbReference type="PDB" id="7A5J">
    <property type="method" value="EM"/>
    <property type="resolution" value="3.10 A"/>
    <property type="chains" value="Y=1-250"/>
</dbReference>
<dbReference type="PDB" id="7A5K">
    <property type="method" value="EM"/>
    <property type="resolution" value="3.70 A"/>
    <property type="chains" value="Y3=1-250"/>
</dbReference>
<dbReference type="PDB" id="7L08">
    <property type="method" value="EM"/>
    <property type="resolution" value="3.49 A"/>
    <property type="chains" value="Y=1-250"/>
</dbReference>
<dbReference type="PDB" id="7L20">
    <property type="method" value="EM"/>
    <property type="resolution" value="3.15 A"/>
    <property type="chains" value="Y=1-250"/>
</dbReference>
<dbReference type="PDB" id="7O9K">
    <property type="method" value="EM"/>
    <property type="resolution" value="3.10 A"/>
    <property type="chains" value="Y=1-250"/>
</dbReference>
<dbReference type="PDB" id="7O9M">
    <property type="method" value="EM"/>
    <property type="resolution" value="2.50 A"/>
    <property type="chains" value="Y=1-250"/>
</dbReference>
<dbReference type="PDB" id="7ODR">
    <property type="method" value="EM"/>
    <property type="resolution" value="2.90 A"/>
    <property type="chains" value="Y=1-250"/>
</dbReference>
<dbReference type="PDB" id="7ODS">
    <property type="method" value="EM"/>
    <property type="resolution" value="3.10 A"/>
    <property type="chains" value="Y=1-250"/>
</dbReference>
<dbReference type="PDB" id="7ODT">
    <property type="method" value="EM"/>
    <property type="resolution" value="3.10 A"/>
    <property type="chains" value="Y=1-250"/>
</dbReference>
<dbReference type="PDB" id="7OF0">
    <property type="method" value="EM"/>
    <property type="resolution" value="2.20 A"/>
    <property type="chains" value="Y=1-250"/>
</dbReference>
<dbReference type="PDB" id="7OF2">
    <property type="method" value="EM"/>
    <property type="resolution" value="2.70 A"/>
    <property type="chains" value="Y=1-250"/>
</dbReference>
<dbReference type="PDB" id="7OF3">
    <property type="method" value="EM"/>
    <property type="resolution" value="2.70 A"/>
    <property type="chains" value="Y=1-250"/>
</dbReference>
<dbReference type="PDB" id="7OF4">
    <property type="method" value="EM"/>
    <property type="resolution" value="2.70 A"/>
    <property type="chains" value="Y=1-250"/>
</dbReference>
<dbReference type="PDB" id="7OF5">
    <property type="method" value="EM"/>
    <property type="resolution" value="2.90 A"/>
    <property type="chains" value="Y=1-250"/>
</dbReference>
<dbReference type="PDB" id="7OF6">
    <property type="method" value="EM"/>
    <property type="resolution" value="2.60 A"/>
    <property type="chains" value="Y=1-250"/>
</dbReference>
<dbReference type="PDB" id="7OF7">
    <property type="method" value="EM"/>
    <property type="resolution" value="2.50 A"/>
    <property type="chains" value="Y=1-250"/>
</dbReference>
<dbReference type="PDB" id="7OG4">
    <property type="method" value="EM"/>
    <property type="resolution" value="3.80 A"/>
    <property type="chains" value="XY=1-250"/>
</dbReference>
<dbReference type="PDB" id="7OI6">
    <property type="method" value="EM"/>
    <property type="resolution" value="5.70 A"/>
    <property type="chains" value="Y=1-250"/>
</dbReference>
<dbReference type="PDB" id="7OI7">
    <property type="method" value="EM"/>
    <property type="resolution" value="3.50 A"/>
    <property type="chains" value="Y=1-250"/>
</dbReference>
<dbReference type="PDB" id="7OI8">
    <property type="method" value="EM"/>
    <property type="resolution" value="3.50 A"/>
    <property type="chains" value="Y=1-250"/>
</dbReference>
<dbReference type="PDB" id="7OI9">
    <property type="method" value="EM"/>
    <property type="resolution" value="3.30 A"/>
    <property type="chains" value="Y=1-250"/>
</dbReference>
<dbReference type="PDB" id="7OIA">
    <property type="method" value="EM"/>
    <property type="resolution" value="3.20 A"/>
    <property type="chains" value="Y=1-250"/>
</dbReference>
<dbReference type="PDB" id="7OIB">
    <property type="method" value="EM"/>
    <property type="resolution" value="3.30 A"/>
    <property type="chains" value="Y=1-250"/>
</dbReference>
<dbReference type="PDB" id="7OIC">
    <property type="method" value="EM"/>
    <property type="resolution" value="3.10 A"/>
    <property type="chains" value="Y=1-250"/>
</dbReference>
<dbReference type="PDB" id="7OID">
    <property type="method" value="EM"/>
    <property type="resolution" value="3.70 A"/>
    <property type="chains" value="Y=1-250"/>
</dbReference>
<dbReference type="PDB" id="7OIE">
    <property type="method" value="EM"/>
    <property type="resolution" value="3.50 A"/>
    <property type="chains" value="Y=1-250"/>
</dbReference>
<dbReference type="PDB" id="7PD3">
    <property type="method" value="EM"/>
    <property type="resolution" value="3.40 A"/>
    <property type="chains" value="Y=1-250"/>
</dbReference>
<dbReference type="PDB" id="7PO4">
    <property type="method" value="EM"/>
    <property type="resolution" value="2.56 A"/>
    <property type="chains" value="Y=1-250"/>
</dbReference>
<dbReference type="PDB" id="7QH6">
    <property type="method" value="EM"/>
    <property type="resolution" value="3.08 A"/>
    <property type="chains" value="Y=1-250"/>
</dbReference>
<dbReference type="PDB" id="7QH7">
    <property type="method" value="EM"/>
    <property type="resolution" value="2.89 A"/>
    <property type="chains" value="Y=63-237"/>
</dbReference>
<dbReference type="PDB" id="7QI4">
    <property type="method" value="EM"/>
    <property type="resolution" value="2.21 A"/>
    <property type="chains" value="Y=1-250"/>
</dbReference>
<dbReference type="PDB" id="7QI5">
    <property type="method" value="EM"/>
    <property type="resolution" value="2.63 A"/>
    <property type="chains" value="Y=1-250"/>
</dbReference>
<dbReference type="PDB" id="7QI6">
    <property type="method" value="EM"/>
    <property type="resolution" value="2.98 A"/>
    <property type="chains" value="Y=1-250"/>
</dbReference>
<dbReference type="PDB" id="8ANY">
    <property type="method" value="EM"/>
    <property type="resolution" value="2.85 A"/>
    <property type="chains" value="Y=1-250"/>
</dbReference>
<dbReference type="PDB" id="8K2A">
    <property type="method" value="EM"/>
    <property type="resolution" value="2.90 A"/>
    <property type="chains" value="Lu=1-250"/>
</dbReference>
<dbReference type="PDB" id="8K2B">
    <property type="method" value="EM"/>
    <property type="resolution" value="3.40 A"/>
    <property type="chains" value="Lu=1-250"/>
</dbReference>
<dbReference type="PDB" id="8OIR">
    <property type="method" value="EM"/>
    <property type="resolution" value="3.10 A"/>
    <property type="chains" value="BF=1-250"/>
</dbReference>
<dbReference type="PDB" id="8OIT">
    <property type="method" value="EM"/>
    <property type="resolution" value="2.90 A"/>
    <property type="chains" value="BF=1-250"/>
</dbReference>
<dbReference type="PDB" id="8PK0">
    <property type="method" value="EM"/>
    <property type="resolution" value="3.03 A"/>
    <property type="chains" value="Y=1-250"/>
</dbReference>
<dbReference type="PDB" id="8QSJ">
    <property type="method" value="EM"/>
    <property type="resolution" value="3.00 A"/>
    <property type="chains" value="Y=1-250"/>
</dbReference>
<dbReference type="PDB" id="8QU1">
    <property type="method" value="EM"/>
    <property type="resolution" value="2.74 A"/>
    <property type="chains" value="Y=1-250"/>
</dbReference>
<dbReference type="PDB" id="8QU5">
    <property type="method" value="EM"/>
    <property type="resolution" value="2.42 A"/>
    <property type="chains" value="Y=1-250"/>
</dbReference>
<dbReference type="PDB" id="8RRI">
    <property type="method" value="EM"/>
    <property type="resolution" value="2.40 A"/>
    <property type="chains" value="Y=1-250"/>
</dbReference>
<dbReference type="PDB" id="8XT0">
    <property type="method" value="EM"/>
    <property type="resolution" value="3.20 A"/>
    <property type="chains" value="Lu=1-250"/>
</dbReference>
<dbReference type="PDB" id="8XT1">
    <property type="method" value="EM"/>
    <property type="resolution" value="3.10 A"/>
    <property type="chains" value="Lu=1-250"/>
</dbReference>
<dbReference type="PDB" id="8XT2">
    <property type="method" value="EM"/>
    <property type="resolution" value="3.30 A"/>
    <property type="chains" value="Lu=1-250"/>
</dbReference>
<dbReference type="PDB" id="8XT3">
    <property type="method" value="EM"/>
    <property type="resolution" value="3.10 A"/>
    <property type="chains" value="Lu=1-250"/>
</dbReference>
<dbReference type="PDBsum" id="3J7Y"/>
<dbReference type="PDBsum" id="3J9M"/>
<dbReference type="PDBsum" id="5OOL"/>
<dbReference type="PDBsum" id="5OOM"/>
<dbReference type="PDBsum" id="6I9R"/>
<dbReference type="PDBsum" id="6NU2"/>
<dbReference type="PDBsum" id="6NU3"/>
<dbReference type="PDBsum" id="6VLZ"/>
<dbReference type="PDBsum" id="6VMI"/>
<dbReference type="PDBsum" id="6ZM5"/>
<dbReference type="PDBsum" id="6ZM6"/>
<dbReference type="PDBsum" id="6ZS9"/>
<dbReference type="PDBsum" id="6ZSA"/>
<dbReference type="PDBsum" id="6ZSB"/>
<dbReference type="PDBsum" id="6ZSC"/>
<dbReference type="PDBsum" id="6ZSD"/>
<dbReference type="PDBsum" id="6ZSE"/>
<dbReference type="PDBsum" id="6ZSG"/>
<dbReference type="PDBsum" id="7A5F"/>
<dbReference type="PDBsum" id="7A5G"/>
<dbReference type="PDBsum" id="7A5H"/>
<dbReference type="PDBsum" id="7A5I"/>
<dbReference type="PDBsum" id="7A5J"/>
<dbReference type="PDBsum" id="7A5K"/>
<dbReference type="PDBsum" id="7L08"/>
<dbReference type="PDBsum" id="7L20"/>
<dbReference type="PDBsum" id="7O9K"/>
<dbReference type="PDBsum" id="7O9M"/>
<dbReference type="PDBsum" id="7ODR"/>
<dbReference type="PDBsum" id="7ODS"/>
<dbReference type="PDBsum" id="7ODT"/>
<dbReference type="PDBsum" id="7OF0"/>
<dbReference type="PDBsum" id="7OF2"/>
<dbReference type="PDBsum" id="7OF3"/>
<dbReference type="PDBsum" id="7OF4"/>
<dbReference type="PDBsum" id="7OF5"/>
<dbReference type="PDBsum" id="7OF6"/>
<dbReference type="PDBsum" id="7OF7"/>
<dbReference type="PDBsum" id="7OG4"/>
<dbReference type="PDBsum" id="7OI6"/>
<dbReference type="PDBsum" id="7OI7"/>
<dbReference type="PDBsum" id="7OI8"/>
<dbReference type="PDBsum" id="7OI9"/>
<dbReference type="PDBsum" id="7OIA"/>
<dbReference type="PDBsum" id="7OIB"/>
<dbReference type="PDBsum" id="7OIC"/>
<dbReference type="PDBsum" id="7OID"/>
<dbReference type="PDBsum" id="7OIE"/>
<dbReference type="PDBsum" id="7PD3"/>
<dbReference type="PDBsum" id="7PO4"/>
<dbReference type="PDBsum" id="7QH6"/>
<dbReference type="PDBsum" id="7QH7"/>
<dbReference type="PDBsum" id="7QI4"/>
<dbReference type="PDBsum" id="7QI5"/>
<dbReference type="PDBsum" id="7QI6"/>
<dbReference type="PDBsum" id="8ANY"/>
<dbReference type="PDBsum" id="8K2A"/>
<dbReference type="PDBsum" id="8K2B"/>
<dbReference type="PDBsum" id="8OIR"/>
<dbReference type="PDBsum" id="8OIT"/>
<dbReference type="PDBsum" id="8PK0"/>
<dbReference type="PDBsum" id="8QSJ"/>
<dbReference type="PDBsum" id="8QU1"/>
<dbReference type="PDBsum" id="8QU5"/>
<dbReference type="PDBsum" id="8RRI"/>
<dbReference type="PDBsum" id="8XT0"/>
<dbReference type="PDBsum" id="8XT1"/>
<dbReference type="PDBsum" id="8XT2"/>
<dbReference type="PDBsum" id="8XT3"/>
<dbReference type="EMDB" id="EMD-0514"/>
<dbReference type="EMDB" id="EMD-0515"/>
<dbReference type="EMDB" id="EMD-11278"/>
<dbReference type="EMDB" id="EMD-11279"/>
<dbReference type="EMDB" id="EMD-11390"/>
<dbReference type="EMDB" id="EMD-11391"/>
<dbReference type="EMDB" id="EMD-11392"/>
<dbReference type="EMDB" id="EMD-11393"/>
<dbReference type="EMDB" id="EMD-11394"/>
<dbReference type="EMDB" id="EMD-11395"/>
<dbReference type="EMDB" id="EMD-11397"/>
<dbReference type="EMDB" id="EMD-11641"/>
<dbReference type="EMDB" id="EMD-11642"/>
<dbReference type="EMDB" id="EMD-11643"/>
<dbReference type="EMDB" id="EMD-11644"/>
<dbReference type="EMDB" id="EMD-11645"/>
<dbReference type="EMDB" id="EMD-11646"/>
<dbReference type="EMDB" id="EMD-12763"/>
<dbReference type="EMDB" id="EMD-12764"/>
<dbReference type="EMDB" id="EMD-12845"/>
<dbReference type="EMDB" id="EMD-12846"/>
<dbReference type="EMDB" id="EMD-12847"/>
<dbReference type="EMDB" id="EMD-12865"/>
<dbReference type="EMDB" id="EMD-12867"/>
<dbReference type="EMDB" id="EMD-12868"/>
<dbReference type="EMDB" id="EMD-12869"/>
<dbReference type="EMDB" id="EMD-12870"/>
<dbReference type="EMDB" id="EMD-12871"/>
<dbReference type="EMDB" id="EMD-12872"/>
<dbReference type="EMDB" id="EMD-12877"/>
<dbReference type="EMDB" id="EMD-12919"/>
<dbReference type="EMDB" id="EMD-12920"/>
<dbReference type="EMDB" id="EMD-12921"/>
<dbReference type="EMDB" id="EMD-12922"/>
<dbReference type="EMDB" id="EMD-12923"/>
<dbReference type="EMDB" id="EMD-12924"/>
<dbReference type="EMDB" id="EMD-12925"/>
<dbReference type="EMDB" id="EMD-12926"/>
<dbReference type="EMDB" id="EMD-12927"/>
<dbReference type="EMDB" id="EMD-13329"/>
<dbReference type="EMDB" id="EMD-13562"/>
<dbReference type="EMDB" id="EMD-13965"/>
<dbReference type="EMDB" id="EMD-13967"/>
<dbReference type="EMDB" id="EMD-13980"/>
<dbReference type="EMDB" id="EMD-13981"/>
<dbReference type="EMDB" id="EMD-13982"/>
<dbReference type="EMDB" id="EMD-15544"/>
<dbReference type="EMDB" id="EMD-16897"/>
<dbReference type="EMDB" id="EMD-16899"/>
<dbReference type="EMDB" id="EMD-17719"/>
<dbReference type="EMDB" id="EMD-19460"/>
<dbReference type="EMDB" id="EMD-21233"/>
<dbReference type="EMDB" id="EMD-21242"/>
<dbReference type="EMDB" id="EMD-23096"/>
<dbReference type="EMDB" id="EMD-23121"/>
<dbReference type="EMDB" id="EMD-36836"/>
<dbReference type="EMDB" id="EMD-36837"/>
<dbReference type="EMDB" id="EMD-3842"/>
<dbReference type="EMDB" id="EMD-3843"/>
<dbReference type="EMDB" id="EMD-38632"/>
<dbReference type="EMDB" id="EMD-38633"/>
<dbReference type="EMDB" id="EMD-38634"/>
<dbReference type="EMDB" id="EMD-38635"/>
<dbReference type="EMDB" id="EMD-4434"/>
<dbReference type="SMR" id="Q9HD33"/>
<dbReference type="BioGRID" id="121392">
    <property type="interactions" value="214"/>
</dbReference>
<dbReference type="ComplexPortal" id="CPX-5226">
    <property type="entry name" value="39S mitochondrial large ribosomal subunit"/>
</dbReference>
<dbReference type="CORUM" id="Q9HD33"/>
<dbReference type="FunCoup" id="Q9HD33">
    <property type="interactions" value="1923"/>
</dbReference>
<dbReference type="IntAct" id="Q9HD33">
    <property type="interactions" value="130"/>
</dbReference>
<dbReference type="MINT" id="Q9HD33"/>
<dbReference type="STRING" id="9606.ENSP00000417602"/>
<dbReference type="GlyGen" id="Q9HD33">
    <property type="glycosylation" value="2 sites, 1 O-linked glycan (2 sites)"/>
</dbReference>
<dbReference type="iPTMnet" id="Q9HD33"/>
<dbReference type="PhosphoSitePlus" id="Q9HD33"/>
<dbReference type="BioMuta" id="MRPL47"/>
<dbReference type="DMDM" id="212276461"/>
<dbReference type="jPOST" id="Q9HD33"/>
<dbReference type="MassIVE" id="Q9HD33"/>
<dbReference type="PaxDb" id="9606-ENSP00000417602"/>
<dbReference type="PeptideAtlas" id="Q9HD33"/>
<dbReference type="ProteomicsDB" id="81820">
    <molecule id="Q9HD33-1"/>
</dbReference>
<dbReference type="ProteomicsDB" id="81821">
    <molecule id="Q9HD33-2"/>
</dbReference>
<dbReference type="ProteomicsDB" id="81822">
    <molecule id="Q9HD33-3"/>
</dbReference>
<dbReference type="Pumba" id="Q9HD33"/>
<dbReference type="Antibodypedia" id="50126">
    <property type="antibodies" value="72 antibodies from 22 providers"/>
</dbReference>
<dbReference type="DNASU" id="57129"/>
<dbReference type="Ensembl" id="ENST00000259038.6">
    <molecule id="Q9HD33-2"/>
    <property type="protein sequence ID" value="ENSP00000259038.2"/>
    <property type="gene ID" value="ENSG00000136522.14"/>
</dbReference>
<dbReference type="Ensembl" id="ENST00000392659.2">
    <molecule id="Q9HD33-3"/>
    <property type="protein sequence ID" value="ENSP00000376427.2"/>
    <property type="gene ID" value="ENSG00000136522.14"/>
</dbReference>
<dbReference type="Ensembl" id="ENST00000476781.6">
    <molecule id="Q9HD33-1"/>
    <property type="protein sequence ID" value="ENSP00000417602.1"/>
    <property type="gene ID" value="ENSG00000136522.14"/>
</dbReference>
<dbReference type="GeneID" id="57129"/>
<dbReference type="KEGG" id="hsa:57129"/>
<dbReference type="MANE-Select" id="ENST00000476781.6">
    <property type="protein sequence ID" value="ENSP00000417602.1"/>
    <property type="RefSeq nucleotide sequence ID" value="NM_020409.3"/>
    <property type="RefSeq protein sequence ID" value="NP_065142.2"/>
</dbReference>
<dbReference type="UCSC" id="uc003fjz.5">
    <molecule id="Q9HD33-1"/>
    <property type="organism name" value="human"/>
</dbReference>
<dbReference type="AGR" id="HGNC:16652"/>
<dbReference type="CTD" id="57129"/>
<dbReference type="DisGeNET" id="57129"/>
<dbReference type="GeneCards" id="MRPL47"/>
<dbReference type="HGNC" id="HGNC:16652">
    <property type="gene designation" value="MRPL47"/>
</dbReference>
<dbReference type="HPA" id="ENSG00000136522">
    <property type="expression patterns" value="Low tissue specificity"/>
</dbReference>
<dbReference type="MIM" id="611852">
    <property type="type" value="gene"/>
</dbReference>
<dbReference type="neXtProt" id="NX_Q9HD33"/>
<dbReference type="OpenTargets" id="ENSG00000136522"/>
<dbReference type="PharmGKB" id="PA30979"/>
<dbReference type="VEuPathDB" id="HostDB:ENSG00000136522"/>
<dbReference type="eggNOG" id="KOG3331">
    <property type="taxonomic scope" value="Eukaryota"/>
</dbReference>
<dbReference type="GeneTree" id="ENSGT00390000002837"/>
<dbReference type="InParanoid" id="Q9HD33"/>
<dbReference type="OMA" id="LTMEHEC"/>
<dbReference type="OrthoDB" id="270763at2759"/>
<dbReference type="PAN-GO" id="Q9HD33">
    <property type="GO annotations" value="3 GO annotations based on evolutionary models"/>
</dbReference>
<dbReference type="PhylomeDB" id="Q9HD33"/>
<dbReference type="TreeFam" id="TF314327"/>
<dbReference type="PathwayCommons" id="Q9HD33"/>
<dbReference type="Reactome" id="R-HSA-5368286">
    <property type="pathway name" value="Mitochondrial translation initiation"/>
</dbReference>
<dbReference type="Reactome" id="R-HSA-5389840">
    <property type="pathway name" value="Mitochondrial translation elongation"/>
</dbReference>
<dbReference type="Reactome" id="R-HSA-5419276">
    <property type="pathway name" value="Mitochondrial translation termination"/>
</dbReference>
<dbReference type="SignaLink" id="Q9HD33"/>
<dbReference type="SIGNOR" id="Q9HD33"/>
<dbReference type="BioGRID-ORCS" id="57129">
    <property type="hits" value="290 hits in 1163 CRISPR screens"/>
</dbReference>
<dbReference type="CD-CODE" id="5965E019">
    <property type="entry name" value="mtRNA granule"/>
</dbReference>
<dbReference type="CD-CODE" id="91857CE7">
    <property type="entry name" value="Nucleolus"/>
</dbReference>
<dbReference type="ChiTaRS" id="MRPL47">
    <property type="organism name" value="human"/>
</dbReference>
<dbReference type="EvolutionaryTrace" id="Q9HD33"/>
<dbReference type="GenomeRNAi" id="57129"/>
<dbReference type="Pharos" id="Q9HD33">
    <property type="development level" value="Tbio"/>
</dbReference>
<dbReference type="PRO" id="PR:Q9HD33"/>
<dbReference type="Proteomes" id="UP000005640">
    <property type="component" value="Chromosome 3"/>
</dbReference>
<dbReference type="RNAct" id="Q9HD33">
    <property type="molecule type" value="protein"/>
</dbReference>
<dbReference type="Bgee" id="ENSG00000136522">
    <property type="expression patterns" value="Expressed in left ventricle myocardium and 193 other cell types or tissues"/>
</dbReference>
<dbReference type="GO" id="GO:0005743">
    <property type="term" value="C:mitochondrial inner membrane"/>
    <property type="evidence" value="ECO:0000304"/>
    <property type="project" value="Reactome"/>
</dbReference>
<dbReference type="GO" id="GO:0005762">
    <property type="term" value="C:mitochondrial large ribosomal subunit"/>
    <property type="evidence" value="ECO:0000314"/>
    <property type="project" value="UniProtKB"/>
</dbReference>
<dbReference type="GO" id="GO:0005739">
    <property type="term" value="C:mitochondrion"/>
    <property type="evidence" value="ECO:0000314"/>
    <property type="project" value="HPA"/>
</dbReference>
<dbReference type="GO" id="GO:0003735">
    <property type="term" value="F:structural constituent of ribosome"/>
    <property type="evidence" value="ECO:0000318"/>
    <property type="project" value="GO_Central"/>
</dbReference>
<dbReference type="GO" id="GO:0032543">
    <property type="term" value="P:mitochondrial translation"/>
    <property type="evidence" value="ECO:0000318"/>
    <property type="project" value="GO_Central"/>
</dbReference>
<dbReference type="Gene3D" id="6.10.330.20">
    <property type="match status" value="1"/>
</dbReference>
<dbReference type="InterPro" id="IPR038340">
    <property type="entry name" value="MRP-L47_sf"/>
</dbReference>
<dbReference type="InterPro" id="IPR010729">
    <property type="entry name" value="Ribosomal_uL29_mit"/>
</dbReference>
<dbReference type="PANTHER" id="PTHR21183:SF18">
    <property type="entry name" value="LARGE RIBOSOMAL SUBUNIT PROTEIN UL29M"/>
    <property type="match status" value="1"/>
</dbReference>
<dbReference type="PANTHER" id="PTHR21183">
    <property type="entry name" value="RIBOSOMAL PROTEIN L47, MITOCHONDRIAL-RELATED"/>
    <property type="match status" value="1"/>
</dbReference>
<dbReference type="Pfam" id="PF06984">
    <property type="entry name" value="MRP-L47"/>
    <property type="match status" value="1"/>
</dbReference>
<evidence type="ECO:0000255" key="1"/>
<evidence type="ECO:0000269" key="2">
    <source>
    </source>
</evidence>
<evidence type="ECO:0000269" key="3">
    <source>
    </source>
</evidence>
<evidence type="ECO:0000269" key="4">
    <source>
    </source>
</evidence>
<evidence type="ECO:0000269" key="5">
    <source>
    </source>
</evidence>
<evidence type="ECO:0000303" key="6">
    <source>
    </source>
</evidence>
<evidence type="ECO:0000303" key="7">
    <source>
    </source>
</evidence>
<evidence type="ECO:0000305" key="8"/>
<evidence type="ECO:0000312" key="9">
    <source>
        <dbReference type="EMBL" id="AAG01157.1"/>
    </source>
</evidence>
<evidence type="ECO:0007744" key="10">
    <source>
        <dbReference type="PDB" id="3J7Y"/>
    </source>
</evidence>
<evidence type="ECO:0007744" key="11">
    <source>
        <dbReference type="PDB" id="3J9M"/>
    </source>
</evidence>
<evidence type="ECO:0007744" key="12">
    <source>
        <dbReference type="PDB" id="5OOL"/>
    </source>
</evidence>
<evidence type="ECO:0007744" key="13">
    <source>
        <dbReference type="PDB" id="5OOM"/>
    </source>
</evidence>
<evidence type="ECO:0007744" key="14">
    <source>
        <dbReference type="PDB" id="7QH6"/>
    </source>
</evidence>
<evidence type="ECO:0007744" key="15">
    <source>
        <dbReference type="PDB" id="7QH7"/>
    </source>
</evidence>
<evidence type="ECO:0007744" key="16">
    <source>
    </source>
</evidence>
<evidence type="ECO:0007829" key="17">
    <source>
        <dbReference type="PDB" id="3J7Y"/>
    </source>
</evidence>
<evidence type="ECO:0007829" key="18">
    <source>
        <dbReference type="PDB" id="7OF0"/>
    </source>
</evidence>
<evidence type="ECO:0007829" key="19">
    <source>
        <dbReference type="PDB" id="7OI9"/>
    </source>
</evidence>
<keyword id="KW-0002">3D-structure</keyword>
<keyword id="KW-0007">Acetylation</keyword>
<keyword id="KW-0025">Alternative splicing</keyword>
<keyword id="KW-0496">Mitochondrion</keyword>
<keyword id="KW-1267">Proteomics identification</keyword>
<keyword id="KW-1185">Reference proteome</keyword>
<keyword id="KW-0687">Ribonucleoprotein</keyword>
<keyword id="KW-0689">Ribosomal protein</keyword>
<keyword id="KW-0809">Transit peptide</keyword>
<comment type="subunit">
    <text evidence="2 3 4 5">Component of the mitochondrial large ribosomal subunit (mt-LSU) (PubMed:25278503, PubMed:25838379, PubMed:28892042, PubMed:35177605). Mature mammalian 55S mitochondrial ribosomes consist of a small (28S) and a large (39S) subunit. The 28S small subunit contains a 12S ribosomal RNA (12S mt-rRNA) and 30 different proteins. The 39S large subunit contains a 16S rRNA (16S mt-rRNA), a copy of mitochondrial valine transfer RNA (mt-tRNA(Val)), which plays an integral structural role, and 52 different proteins.</text>
</comment>
<comment type="subcellular location">
    <subcellularLocation>
        <location evidence="2 3 4">Mitochondrion</location>
    </subcellularLocation>
</comment>
<comment type="alternative products">
    <event type="alternative splicing"/>
    <isoform>
        <id>Q9HD33-1</id>
        <name>1</name>
        <sequence type="displayed"/>
    </isoform>
    <isoform>
        <id>Q9HD33-2</id>
        <name>2</name>
        <sequence type="described" ref="VSP_035650"/>
    </isoform>
    <isoform>
        <id>Q9HD33-3</id>
        <name>3</name>
        <sequence type="described" ref="VSP_035649"/>
    </isoform>
</comment>
<comment type="similarity">
    <text evidence="8">Belongs to the universal ribosomal protein uL29 family.</text>
</comment>
<comment type="sequence caution" evidence="8">
    <conflict type="miscellaneous discrepancy">
        <sequence resource="EMBL-CDS" id="AAG01157"/>
    </conflict>
    <text>Chimeric cDNA. Seems to include a portion of the orthologous murine sequence.</text>
</comment>
<comment type="sequence caution" evidence="8">
    <conflict type="erroneous initiation">
        <sequence resource="EMBL-CDS" id="AAO92749"/>
    </conflict>
</comment>
<proteinExistence type="evidence at protein level"/>
<name>RM47_HUMAN</name>
<organism evidence="9">
    <name type="scientific">Homo sapiens</name>
    <name type="common">Human</name>
    <dbReference type="NCBI Taxonomy" id="9606"/>
    <lineage>
        <taxon>Eukaryota</taxon>
        <taxon>Metazoa</taxon>
        <taxon>Chordata</taxon>
        <taxon>Craniata</taxon>
        <taxon>Vertebrata</taxon>
        <taxon>Euteleostomi</taxon>
        <taxon>Mammalia</taxon>
        <taxon>Eutheria</taxon>
        <taxon>Euarchontoglires</taxon>
        <taxon>Primates</taxon>
        <taxon>Haplorrhini</taxon>
        <taxon>Catarrhini</taxon>
        <taxon>Hominidae</taxon>
        <taxon>Homo</taxon>
    </lineage>
</organism>
<sequence>MAAAGLALLCRRVSSALKSSRSLITPQVPACTGFFLSLLPKSTPNVTSFHQYRLLHTTLSRKGLEEFFDDPKNWGQEKVKSGAAWTCQQLRNKSNEDLHKLWYVLLKERNMLLTLEQEAKRQRLPMPSPERLDKVVDSMDALDKVVQEREDALRLLQTGQERARPGAWRRDIFGRIIWHKFKQWVIPWHLNKRYNRKRFFALPYVDHFLRLEREKRARIKARKENLERKKAKILLKKFPHLAEAQKSSLV</sequence>
<feature type="transit peptide" description="Mitochondrion" evidence="1">
    <location>
        <begin position="1"/>
        <end status="unknown"/>
    </location>
</feature>
<feature type="chain" id="PRO_0000030567" description="Large ribosomal subunit protein uL29m">
    <location>
        <begin status="unknown"/>
        <end position="250"/>
    </location>
</feature>
<feature type="modified residue" description="N6-acetyllysine" evidence="16">
    <location>
        <position position="144"/>
    </location>
</feature>
<feature type="splice variant" id="VSP_035649" description="In isoform 3." evidence="6">
    <location>
        <begin position="1"/>
        <end position="110"/>
    </location>
</feature>
<feature type="splice variant" id="VSP_035650" description="In isoform 2." evidence="6">
    <location>
        <begin position="34"/>
        <end position="53"/>
    </location>
</feature>
<feature type="sequence variant" id="VAR_052042" description="In dbSNP:rs2339844.">
    <original>C</original>
    <variation>G</variation>
    <location>
        <position position="10"/>
    </location>
</feature>
<feature type="sequence variant" id="VAR_052043" description="In dbSNP:rs10513762.">
    <original>R</original>
    <variation>H</variation>
    <location>
        <position position="213"/>
    </location>
</feature>
<feature type="sequence conflict" description="In Ref. 4; AAO92749." evidence="8" ref="4">
    <original>AAAG</original>
    <variation>DATY</variation>
    <location>
        <begin position="2"/>
        <end position="5"/>
    </location>
</feature>
<feature type="helix" evidence="18">
    <location>
        <begin position="64"/>
        <end position="67"/>
    </location>
</feature>
<feature type="helix" evidence="18">
    <location>
        <begin position="71"/>
        <end position="73"/>
    </location>
</feature>
<feature type="strand" evidence="19">
    <location>
        <begin position="74"/>
        <end position="77"/>
    </location>
</feature>
<feature type="helix" evidence="18">
    <location>
        <begin position="87"/>
        <end position="91"/>
    </location>
</feature>
<feature type="helix" evidence="18">
    <location>
        <begin position="95"/>
        <end position="122"/>
    </location>
</feature>
<feature type="helix" evidence="18">
    <location>
        <begin position="130"/>
        <end position="158"/>
    </location>
</feature>
<feature type="strand" evidence="17">
    <location>
        <begin position="161"/>
        <end position="164"/>
    </location>
</feature>
<feature type="strand" evidence="18">
    <location>
        <begin position="166"/>
        <end position="170"/>
    </location>
</feature>
<feature type="strand" evidence="18">
    <location>
        <begin position="176"/>
        <end position="180"/>
    </location>
</feature>
<feature type="strand" evidence="18">
    <location>
        <begin position="182"/>
        <end position="186"/>
    </location>
</feature>
<feature type="turn" evidence="18">
    <location>
        <begin position="188"/>
        <end position="190"/>
    </location>
</feature>
<feature type="helix" evidence="18">
    <location>
        <begin position="192"/>
        <end position="196"/>
    </location>
</feature>
<feature type="helix" evidence="18">
    <location>
        <begin position="203"/>
        <end position="205"/>
    </location>
</feature>
<feature type="helix" evidence="18">
    <location>
        <begin position="206"/>
        <end position="237"/>
    </location>
</feature>
<accession>Q9HD33</accession>
<accession>Q6XRG1</accession>
<accession>Q8N5D1</accession>